<evidence type="ECO:0000255" key="1">
    <source>
        <dbReference type="HAMAP-Rule" id="MF_01358"/>
    </source>
</evidence>
<keyword id="KW-0997">Cell inner membrane</keyword>
<keyword id="KW-1003">Cell membrane</keyword>
<keyword id="KW-0472">Membrane</keyword>
<keyword id="KW-0520">NAD</keyword>
<keyword id="KW-0874">Quinone</keyword>
<keyword id="KW-1278">Translocase</keyword>
<keyword id="KW-0813">Transport</keyword>
<keyword id="KW-0830">Ubiquinone</keyword>
<organism>
    <name type="scientific">Campylobacter concisus (strain 13826)</name>
    <dbReference type="NCBI Taxonomy" id="360104"/>
    <lineage>
        <taxon>Bacteria</taxon>
        <taxon>Pseudomonadati</taxon>
        <taxon>Campylobacterota</taxon>
        <taxon>Epsilonproteobacteria</taxon>
        <taxon>Campylobacterales</taxon>
        <taxon>Campylobacteraceae</taxon>
        <taxon>Campylobacter</taxon>
    </lineage>
</organism>
<feature type="chain" id="PRO_0000371843" description="NADH-quinone oxidoreductase subunit D">
    <location>
        <begin position="1"/>
        <end position="409"/>
    </location>
</feature>
<name>NUOD_CAMC1</name>
<dbReference type="EC" id="7.1.1.-" evidence="1"/>
<dbReference type="EMBL" id="CP000792">
    <property type="protein sequence ID" value="ABW74726.1"/>
    <property type="molecule type" value="Genomic_DNA"/>
</dbReference>
<dbReference type="RefSeq" id="WP_048809722.1">
    <property type="nucleotide sequence ID" value="NC_009802.2"/>
</dbReference>
<dbReference type="SMR" id="A8Z6E5"/>
<dbReference type="STRING" id="360104.CCC13826_1659"/>
<dbReference type="KEGG" id="cco:CCC13826_1659"/>
<dbReference type="eggNOG" id="COG0649">
    <property type="taxonomic scope" value="Bacteria"/>
</dbReference>
<dbReference type="HOGENOM" id="CLU_015134_1_2_7"/>
<dbReference type="OrthoDB" id="9801496at2"/>
<dbReference type="Proteomes" id="UP000001121">
    <property type="component" value="Chromosome"/>
</dbReference>
<dbReference type="GO" id="GO:0005886">
    <property type="term" value="C:plasma membrane"/>
    <property type="evidence" value="ECO:0007669"/>
    <property type="project" value="UniProtKB-SubCell"/>
</dbReference>
<dbReference type="GO" id="GO:0051287">
    <property type="term" value="F:NAD binding"/>
    <property type="evidence" value="ECO:0007669"/>
    <property type="project" value="InterPro"/>
</dbReference>
<dbReference type="GO" id="GO:0050136">
    <property type="term" value="F:NADH:ubiquinone reductase (non-electrogenic) activity"/>
    <property type="evidence" value="ECO:0007669"/>
    <property type="project" value="UniProtKB-UniRule"/>
</dbReference>
<dbReference type="GO" id="GO:0048038">
    <property type="term" value="F:quinone binding"/>
    <property type="evidence" value="ECO:0007669"/>
    <property type="project" value="UniProtKB-KW"/>
</dbReference>
<dbReference type="Gene3D" id="1.10.645.10">
    <property type="entry name" value="Cytochrome-c3 Hydrogenase, chain B"/>
    <property type="match status" value="1"/>
</dbReference>
<dbReference type="HAMAP" id="MF_01358">
    <property type="entry name" value="NDH1_NuoD"/>
    <property type="match status" value="1"/>
</dbReference>
<dbReference type="InterPro" id="IPR001135">
    <property type="entry name" value="NADH_Q_OxRdtase_suD"/>
</dbReference>
<dbReference type="InterPro" id="IPR022885">
    <property type="entry name" value="NDH1_su_D/H"/>
</dbReference>
<dbReference type="InterPro" id="IPR029014">
    <property type="entry name" value="NiFe-Hase_large"/>
</dbReference>
<dbReference type="NCBIfam" id="TIGR01962">
    <property type="entry name" value="NuoD"/>
    <property type="match status" value="1"/>
</dbReference>
<dbReference type="NCBIfam" id="NF004739">
    <property type="entry name" value="PRK06075.1"/>
    <property type="match status" value="1"/>
</dbReference>
<dbReference type="PANTHER" id="PTHR11993:SF10">
    <property type="entry name" value="NADH DEHYDROGENASE [UBIQUINONE] IRON-SULFUR PROTEIN 2, MITOCHONDRIAL"/>
    <property type="match status" value="1"/>
</dbReference>
<dbReference type="PANTHER" id="PTHR11993">
    <property type="entry name" value="NADH-UBIQUINONE OXIDOREDUCTASE 49 KDA SUBUNIT"/>
    <property type="match status" value="1"/>
</dbReference>
<dbReference type="Pfam" id="PF00346">
    <property type="entry name" value="Complex1_49kDa"/>
    <property type="match status" value="1"/>
</dbReference>
<dbReference type="SUPFAM" id="SSF56762">
    <property type="entry name" value="HydB/Nqo4-like"/>
    <property type="match status" value="1"/>
</dbReference>
<comment type="function">
    <text evidence="1">NDH-1 shuttles electrons from NADH, via FMN and iron-sulfur (Fe-S) centers, to quinones in the respiratory chain. The immediate electron acceptor for the enzyme in this species is believed to be ubiquinone. Couples the redox reaction to proton translocation (for every two electrons transferred, four hydrogen ions are translocated across the cytoplasmic membrane), and thus conserves the redox energy in a proton gradient.</text>
</comment>
<comment type="catalytic activity">
    <reaction evidence="1">
        <text>a quinone + NADH + 5 H(+)(in) = a quinol + NAD(+) + 4 H(+)(out)</text>
        <dbReference type="Rhea" id="RHEA:57888"/>
        <dbReference type="ChEBI" id="CHEBI:15378"/>
        <dbReference type="ChEBI" id="CHEBI:24646"/>
        <dbReference type="ChEBI" id="CHEBI:57540"/>
        <dbReference type="ChEBI" id="CHEBI:57945"/>
        <dbReference type="ChEBI" id="CHEBI:132124"/>
    </reaction>
</comment>
<comment type="subunit">
    <text evidence="1">NDH-1 is composed of 14 different subunits. Subunits NuoB, C, D, E, F, and G constitute the peripheral sector of the complex.</text>
</comment>
<comment type="subcellular location">
    <subcellularLocation>
        <location evidence="1">Cell inner membrane</location>
        <topology evidence="1">Peripheral membrane protein</topology>
        <orientation evidence="1">Cytoplasmic side</orientation>
    </subcellularLocation>
</comment>
<comment type="similarity">
    <text evidence="1">Belongs to the complex I 49 kDa subunit family.</text>
</comment>
<accession>A8Z6E5</accession>
<gene>
    <name evidence="1" type="primary">nuoD</name>
    <name type="ordered locus">Ccon26_01880</name>
    <name type="ORF">CCC13826_1659</name>
</gene>
<proteinExistence type="inferred from homology"/>
<sequence length="409" mass="46184">MSQAPNRLKPFFENLEFEQNDGKMILNFGPQHPSAHGQLKLVLELDGEKVVRAMPEVGFMHRGVEKMAENMTYQEFIPVTDRVDYIASSANNYAFCAAVEKLCAIEVPRRAQIIRVMLLELNRISSHLLFLATHALDVGAMSVFLYAFREREYVLDLIEKYCGARLTHSSIRIGGVPLDLPDGWCEELLKFCEKFPSDITLYEDLLSANRIWQARLIDVGVVSKELALSSGCSGVMLRASGIARDIRKEEPYLIYDELEFDVPYATKGDCYARYLLYMKEMRECVKILKQCVSKYQTSSPAIIADAPEYVSASKEQIMSQNYSLMQHFVLITQGLKPPKGEIYFASESPKGELGIYINSDGSASPYRLKIRTPSFWHCAIYEDMLVGQYVADVAAIIGSTNIILGEVDR</sequence>
<reference key="1">
    <citation type="submission" date="2007-10" db="EMBL/GenBank/DDBJ databases">
        <title>Genome sequence of Campylobacter concisus 13826 isolated from human feces.</title>
        <authorList>
            <person name="Fouts D.E."/>
            <person name="Mongodin E.F."/>
            <person name="Puiu D."/>
            <person name="Sebastian Y."/>
            <person name="Miller W.G."/>
            <person name="Mandrell R.E."/>
            <person name="On S."/>
            <person name="Nelson K.E."/>
        </authorList>
    </citation>
    <scope>NUCLEOTIDE SEQUENCE [LARGE SCALE GENOMIC DNA]</scope>
    <source>
        <strain>13826</strain>
    </source>
</reference>
<protein>
    <recommendedName>
        <fullName evidence="1">NADH-quinone oxidoreductase subunit D</fullName>
        <ecNumber evidence="1">7.1.1.-</ecNumber>
    </recommendedName>
    <alternativeName>
        <fullName evidence="1">NADH dehydrogenase I subunit D</fullName>
    </alternativeName>
    <alternativeName>
        <fullName evidence="1">NDH-1 subunit D</fullName>
    </alternativeName>
</protein>